<evidence type="ECO:0000255" key="1">
    <source>
        <dbReference type="HAMAP-Rule" id="MF_00817"/>
    </source>
</evidence>
<keyword id="KW-0963">Cytoplasm</keyword>
<keyword id="KW-0521">NADP</keyword>
<keyword id="KW-0560">Oxidoreductase</keyword>
<keyword id="KW-0671">Queuosine biosynthesis</keyword>
<accession>Q5X7D5</accession>
<name>QUEF_LEGPA</name>
<sequence>MNKELESIYQNIANQSELGQTANYDSYYNPKRLYPIPRAPKRQEINLDPNSTTFYGFDCWNHYEVSWLNSKGKPVVAMAVISYDCHSPCIIESKSLKLYFNSLNNSTFPDVETVVQTISKDLSHCIGSEVAVNVYPLSEIASQTIYAAFDGICLDKLDIECSVYHVMPDFLSTSSKLVEEVLYSDLLKSNCLVTNQPDWGSVQIIYKGKKINHEGLLKYLISFRNHNEFHEQCIERIFADIMRFCQPESLAVYGRYTRRGGLDINPIRSTEPCAFDGQNIRLIRQ</sequence>
<gene>
    <name evidence="1" type="primary">queF</name>
    <name type="ordered locus">lpp0670</name>
</gene>
<organism>
    <name type="scientific">Legionella pneumophila (strain Paris)</name>
    <dbReference type="NCBI Taxonomy" id="297246"/>
    <lineage>
        <taxon>Bacteria</taxon>
        <taxon>Pseudomonadati</taxon>
        <taxon>Pseudomonadota</taxon>
        <taxon>Gammaproteobacteria</taxon>
        <taxon>Legionellales</taxon>
        <taxon>Legionellaceae</taxon>
        <taxon>Legionella</taxon>
    </lineage>
</organism>
<reference key="1">
    <citation type="journal article" date="2004" name="Nat. Genet.">
        <title>Evidence in the Legionella pneumophila genome for exploitation of host cell functions and high genome plasticity.</title>
        <authorList>
            <person name="Cazalet C."/>
            <person name="Rusniok C."/>
            <person name="Brueggemann H."/>
            <person name="Zidane N."/>
            <person name="Magnier A."/>
            <person name="Ma L."/>
            <person name="Tichit M."/>
            <person name="Jarraud S."/>
            <person name="Bouchier C."/>
            <person name="Vandenesch F."/>
            <person name="Kunst F."/>
            <person name="Etienne J."/>
            <person name="Glaser P."/>
            <person name="Buchrieser C."/>
        </authorList>
    </citation>
    <scope>NUCLEOTIDE SEQUENCE [LARGE SCALE GENOMIC DNA]</scope>
    <source>
        <strain>Paris</strain>
    </source>
</reference>
<feature type="chain" id="PRO_0000163039" description="NADPH-dependent 7-cyano-7-deazaguanine reductase">
    <location>
        <begin position="1"/>
        <end position="285"/>
    </location>
</feature>
<feature type="active site" description="Thioimide intermediate" evidence="1">
    <location>
        <position position="191"/>
    </location>
</feature>
<feature type="active site" description="Proton donor" evidence="1">
    <location>
        <position position="198"/>
    </location>
</feature>
<feature type="binding site" evidence="1">
    <location>
        <begin position="91"/>
        <end position="93"/>
    </location>
    <ligand>
        <name>substrate</name>
    </ligand>
</feature>
<feature type="binding site" evidence="1">
    <location>
        <begin position="93"/>
        <end position="94"/>
    </location>
    <ligand>
        <name>NADPH</name>
        <dbReference type="ChEBI" id="CHEBI:57783"/>
    </ligand>
</feature>
<feature type="binding site" evidence="1">
    <location>
        <begin position="230"/>
        <end position="231"/>
    </location>
    <ligand>
        <name>substrate</name>
    </ligand>
</feature>
<feature type="binding site" evidence="1">
    <location>
        <begin position="259"/>
        <end position="260"/>
    </location>
    <ligand>
        <name>NADPH</name>
        <dbReference type="ChEBI" id="CHEBI:57783"/>
    </ligand>
</feature>
<dbReference type="EC" id="1.7.1.13" evidence="1"/>
<dbReference type="EMBL" id="CR628336">
    <property type="protein sequence ID" value="CAH11818.1"/>
    <property type="molecule type" value="Genomic_DNA"/>
</dbReference>
<dbReference type="RefSeq" id="WP_011213218.1">
    <property type="nucleotide sequence ID" value="NC_006368.1"/>
</dbReference>
<dbReference type="SMR" id="Q5X7D5"/>
<dbReference type="KEGG" id="lpp:lpp0670"/>
<dbReference type="LegioList" id="lpp0670"/>
<dbReference type="HOGENOM" id="CLU_054738_0_0_6"/>
<dbReference type="UniPathway" id="UPA00392"/>
<dbReference type="GO" id="GO:0005737">
    <property type="term" value="C:cytoplasm"/>
    <property type="evidence" value="ECO:0007669"/>
    <property type="project" value="UniProtKB-SubCell"/>
</dbReference>
<dbReference type="GO" id="GO:0033739">
    <property type="term" value="F:preQ1 synthase activity"/>
    <property type="evidence" value="ECO:0007669"/>
    <property type="project" value="UniProtKB-UniRule"/>
</dbReference>
<dbReference type="GO" id="GO:0008616">
    <property type="term" value="P:queuosine biosynthetic process"/>
    <property type="evidence" value="ECO:0007669"/>
    <property type="project" value="UniProtKB-UniRule"/>
</dbReference>
<dbReference type="GO" id="GO:0006400">
    <property type="term" value="P:tRNA modification"/>
    <property type="evidence" value="ECO:0007669"/>
    <property type="project" value="UniProtKB-UniRule"/>
</dbReference>
<dbReference type="Gene3D" id="3.30.1130.10">
    <property type="match status" value="2"/>
</dbReference>
<dbReference type="HAMAP" id="MF_00817">
    <property type="entry name" value="QueF_type2"/>
    <property type="match status" value="1"/>
</dbReference>
<dbReference type="InterPro" id="IPR043133">
    <property type="entry name" value="GTP-CH-I_C/QueF"/>
</dbReference>
<dbReference type="InterPro" id="IPR050084">
    <property type="entry name" value="NADPH_dep_7-cyano-7-deazaG_red"/>
</dbReference>
<dbReference type="InterPro" id="IPR029500">
    <property type="entry name" value="QueF"/>
</dbReference>
<dbReference type="InterPro" id="IPR029139">
    <property type="entry name" value="QueF_N"/>
</dbReference>
<dbReference type="InterPro" id="IPR016428">
    <property type="entry name" value="QueF_type2"/>
</dbReference>
<dbReference type="NCBIfam" id="TIGR03138">
    <property type="entry name" value="QueF"/>
    <property type="match status" value="1"/>
</dbReference>
<dbReference type="PANTHER" id="PTHR34354">
    <property type="entry name" value="NADPH-DEPENDENT 7-CYANO-7-DEAZAGUANINE REDUCTASE"/>
    <property type="match status" value="1"/>
</dbReference>
<dbReference type="PANTHER" id="PTHR34354:SF1">
    <property type="entry name" value="NADPH-DEPENDENT 7-CYANO-7-DEAZAGUANINE REDUCTASE"/>
    <property type="match status" value="1"/>
</dbReference>
<dbReference type="Pfam" id="PF14489">
    <property type="entry name" value="QueF"/>
    <property type="match status" value="1"/>
</dbReference>
<dbReference type="Pfam" id="PF14819">
    <property type="entry name" value="QueF_N"/>
    <property type="match status" value="1"/>
</dbReference>
<dbReference type="PIRSF" id="PIRSF004750">
    <property type="entry name" value="Nitrile_oxidored_YqcD_prd"/>
    <property type="match status" value="1"/>
</dbReference>
<dbReference type="SUPFAM" id="SSF55620">
    <property type="entry name" value="Tetrahydrobiopterin biosynthesis enzymes-like"/>
    <property type="match status" value="1"/>
</dbReference>
<proteinExistence type="inferred from homology"/>
<comment type="function">
    <text evidence="1">Catalyzes the NADPH-dependent reduction of 7-cyano-7-deazaguanine (preQ0) to 7-aminomethyl-7-deazaguanine (preQ1).</text>
</comment>
<comment type="catalytic activity">
    <reaction evidence="1">
        <text>7-aminomethyl-7-carbaguanine + 2 NADP(+) = 7-cyano-7-deazaguanine + 2 NADPH + 3 H(+)</text>
        <dbReference type="Rhea" id="RHEA:13409"/>
        <dbReference type="ChEBI" id="CHEBI:15378"/>
        <dbReference type="ChEBI" id="CHEBI:45075"/>
        <dbReference type="ChEBI" id="CHEBI:57783"/>
        <dbReference type="ChEBI" id="CHEBI:58349"/>
        <dbReference type="ChEBI" id="CHEBI:58703"/>
        <dbReference type="EC" id="1.7.1.13"/>
    </reaction>
</comment>
<comment type="pathway">
    <text evidence="1">tRNA modification; tRNA-queuosine biosynthesis.</text>
</comment>
<comment type="subunit">
    <text evidence="1">Homodimer.</text>
</comment>
<comment type="subcellular location">
    <subcellularLocation>
        <location evidence="1">Cytoplasm</location>
    </subcellularLocation>
</comment>
<comment type="similarity">
    <text evidence="1">Belongs to the GTP cyclohydrolase I family. QueF type 2 subfamily.</text>
</comment>
<protein>
    <recommendedName>
        <fullName evidence="1">NADPH-dependent 7-cyano-7-deazaguanine reductase</fullName>
        <ecNumber evidence="1">1.7.1.13</ecNumber>
    </recommendedName>
    <alternativeName>
        <fullName evidence="1">7-cyano-7-carbaguanine reductase</fullName>
    </alternativeName>
    <alternativeName>
        <fullName evidence="1">NADPH-dependent nitrile oxidoreductase</fullName>
    </alternativeName>
    <alternativeName>
        <fullName evidence="1">PreQ(0) reductase</fullName>
    </alternativeName>
</protein>